<proteinExistence type="inferred from homology"/>
<organism>
    <name type="scientific">Staphylococcus aureus (strain bovine RF122 / ET3-1)</name>
    <dbReference type="NCBI Taxonomy" id="273036"/>
    <lineage>
        <taxon>Bacteria</taxon>
        <taxon>Bacillati</taxon>
        <taxon>Bacillota</taxon>
        <taxon>Bacilli</taxon>
        <taxon>Bacillales</taxon>
        <taxon>Staphylococcaceae</taxon>
        <taxon>Staphylococcus</taxon>
    </lineage>
</organism>
<keyword id="KW-0175">Coiled coil</keyword>
<keyword id="KW-0238">DNA-binding</keyword>
<keyword id="KW-0804">Transcription</keyword>
<keyword id="KW-0805">Transcription regulation</keyword>
<evidence type="ECO:0000255" key="1">
    <source>
        <dbReference type="HAMAP-Rule" id="MF_00105"/>
    </source>
</evidence>
<accession>Q2YT68</accession>
<gene>
    <name evidence="1" type="primary">greA</name>
    <name type="ordered locus">SAB1481c</name>
</gene>
<protein>
    <recommendedName>
        <fullName evidence="1">Transcription elongation factor GreA</fullName>
    </recommendedName>
    <alternativeName>
        <fullName evidence="1">Transcript cleavage factor GreA</fullName>
    </alternativeName>
</protein>
<feature type="chain" id="PRO_1000034300" description="Transcription elongation factor GreA">
    <location>
        <begin position="1"/>
        <end position="158"/>
    </location>
</feature>
<feature type="coiled-coil region" evidence="1">
    <location>
        <begin position="4"/>
        <end position="70"/>
    </location>
</feature>
<dbReference type="EMBL" id="AJ938182">
    <property type="protein sequence ID" value="CAI81170.1"/>
    <property type="molecule type" value="Genomic_DNA"/>
</dbReference>
<dbReference type="RefSeq" id="WP_000431312.1">
    <property type="nucleotide sequence ID" value="NC_007622.1"/>
</dbReference>
<dbReference type="SMR" id="Q2YT68"/>
<dbReference type="KEGG" id="sab:SAB1481c"/>
<dbReference type="HOGENOM" id="CLU_101379_2_1_9"/>
<dbReference type="GO" id="GO:0003677">
    <property type="term" value="F:DNA binding"/>
    <property type="evidence" value="ECO:0007669"/>
    <property type="project" value="UniProtKB-UniRule"/>
</dbReference>
<dbReference type="GO" id="GO:0070063">
    <property type="term" value="F:RNA polymerase binding"/>
    <property type="evidence" value="ECO:0007669"/>
    <property type="project" value="InterPro"/>
</dbReference>
<dbReference type="GO" id="GO:0006354">
    <property type="term" value="P:DNA-templated transcription elongation"/>
    <property type="evidence" value="ECO:0007669"/>
    <property type="project" value="TreeGrafter"/>
</dbReference>
<dbReference type="GO" id="GO:0032784">
    <property type="term" value="P:regulation of DNA-templated transcription elongation"/>
    <property type="evidence" value="ECO:0007669"/>
    <property type="project" value="UniProtKB-UniRule"/>
</dbReference>
<dbReference type="FunFam" id="1.10.287.180:FF:000001">
    <property type="entry name" value="Transcription elongation factor GreA"/>
    <property type="match status" value="1"/>
</dbReference>
<dbReference type="FunFam" id="3.10.50.30:FF:000001">
    <property type="entry name" value="Transcription elongation factor GreA"/>
    <property type="match status" value="1"/>
</dbReference>
<dbReference type="Gene3D" id="3.10.50.30">
    <property type="entry name" value="Transcription elongation factor, GreA/GreB, C-terminal domain"/>
    <property type="match status" value="1"/>
</dbReference>
<dbReference type="Gene3D" id="1.10.287.180">
    <property type="entry name" value="Transcription elongation factor, GreA/GreB, N-terminal domain"/>
    <property type="match status" value="1"/>
</dbReference>
<dbReference type="HAMAP" id="MF_00105">
    <property type="entry name" value="GreA_GreB"/>
    <property type="match status" value="1"/>
</dbReference>
<dbReference type="InterPro" id="IPR036953">
    <property type="entry name" value="GreA/GreB_C_sf"/>
</dbReference>
<dbReference type="InterPro" id="IPR018151">
    <property type="entry name" value="TF_GreA/GreB_CS"/>
</dbReference>
<dbReference type="InterPro" id="IPR006359">
    <property type="entry name" value="Tscrpt_elong_fac_GreA"/>
</dbReference>
<dbReference type="InterPro" id="IPR028624">
    <property type="entry name" value="Tscrpt_elong_fac_GreA/B"/>
</dbReference>
<dbReference type="InterPro" id="IPR001437">
    <property type="entry name" value="Tscrpt_elong_fac_GreA/B_C"/>
</dbReference>
<dbReference type="InterPro" id="IPR023459">
    <property type="entry name" value="Tscrpt_elong_fac_GreA/B_fam"/>
</dbReference>
<dbReference type="InterPro" id="IPR022691">
    <property type="entry name" value="Tscrpt_elong_fac_GreA/B_N"/>
</dbReference>
<dbReference type="InterPro" id="IPR036805">
    <property type="entry name" value="Tscrpt_elong_fac_GreA/B_N_sf"/>
</dbReference>
<dbReference type="NCBIfam" id="TIGR01462">
    <property type="entry name" value="greA"/>
    <property type="match status" value="1"/>
</dbReference>
<dbReference type="NCBIfam" id="NF001261">
    <property type="entry name" value="PRK00226.1-2"/>
    <property type="match status" value="1"/>
</dbReference>
<dbReference type="NCBIfam" id="NF001263">
    <property type="entry name" value="PRK00226.1-4"/>
    <property type="match status" value="1"/>
</dbReference>
<dbReference type="PANTHER" id="PTHR30437">
    <property type="entry name" value="TRANSCRIPTION ELONGATION FACTOR GREA"/>
    <property type="match status" value="1"/>
</dbReference>
<dbReference type="PANTHER" id="PTHR30437:SF4">
    <property type="entry name" value="TRANSCRIPTION ELONGATION FACTOR GREA"/>
    <property type="match status" value="1"/>
</dbReference>
<dbReference type="Pfam" id="PF01272">
    <property type="entry name" value="GreA_GreB"/>
    <property type="match status" value="1"/>
</dbReference>
<dbReference type="Pfam" id="PF03449">
    <property type="entry name" value="GreA_GreB_N"/>
    <property type="match status" value="1"/>
</dbReference>
<dbReference type="PIRSF" id="PIRSF006092">
    <property type="entry name" value="GreA_GreB"/>
    <property type="match status" value="1"/>
</dbReference>
<dbReference type="SUPFAM" id="SSF54534">
    <property type="entry name" value="FKBP-like"/>
    <property type="match status" value="1"/>
</dbReference>
<dbReference type="SUPFAM" id="SSF46557">
    <property type="entry name" value="GreA transcript cleavage protein, N-terminal domain"/>
    <property type="match status" value="1"/>
</dbReference>
<dbReference type="PROSITE" id="PS00829">
    <property type="entry name" value="GREAB_1"/>
    <property type="match status" value="1"/>
</dbReference>
<dbReference type="PROSITE" id="PS00830">
    <property type="entry name" value="GREAB_2"/>
    <property type="match status" value="1"/>
</dbReference>
<name>GREA_STAAB</name>
<comment type="function">
    <text evidence="1">Necessary for efficient RNA polymerase transcription elongation past template-encoded arresting sites. The arresting sites in DNA have the property of trapping a certain fraction of elongating RNA polymerases that pass through, resulting in locked ternary complexes. Cleavage of the nascent transcript by cleavage factors such as GreA or GreB allows the resumption of elongation from the new 3'terminus. GreA releases sequences of 2 to 3 nucleotides.</text>
</comment>
<comment type="similarity">
    <text evidence="1">Belongs to the GreA/GreB family.</text>
</comment>
<reference key="1">
    <citation type="journal article" date="2007" name="PLoS ONE">
        <title>Molecular correlates of host specialization in Staphylococcus aureus.</title>
        <authorList>
            <person name="Herron-Olson L."/>
            <person name="Fitzgerald J.R."/>
            <person name="Musser J.M."/>
            <person name="Kapur V."/>
        </authorList>
    </citation>
    <scope>NUCLEOTIDE SEQUENCE [LARGE SCALE GENOMIC DNA]</scope>
    <source>
        <strain>bovine RF122 / ET3-1</strain>
    </source>
</reference>
<sequence length="158" mass="17743">MENQKQYPMTQEGFEKLERELEELKTVKRPEVVEKIKVARSFGDLSENSEYDAAKDEQGFIEQDIQRIEHMLRNALIIEDTGDNNVVKIGKTVTFVELPGDEEESYQIVGSAESDAFNGKISNESPMAKALIGKGLDDEVRVPLPNGGEMNVKIVNIQ</sequence>